<evidence type="ECO:0000250" key="1">
    <source>
        <dbReference type="UniProtKB" id="O29689"/>
    </source>
</evidence>
<evidence type="ECO:0000250" key="2">
    <source>
        <dbReference type="UniProtKB" id="Q9D7P6"/>
    </source>
</evidence>
<evidence type="ECO:0000255" key="3"/>
<evidence type="ECO:0000269" key="4">
    <source>
    </source>
</evidence>
<evidence type="ECO:0000269" key="5">
    <source>
    </source>
</evidence>
<evidence type="ECO:0000269" key="6">
    <source>
    </source>
</evidence>
<evidence type="ECO:0000269" key="7">
    <source>
    </source>
</evidence>
<evidence type="ECO:0000269" key="8">
    <source>
    </source>
</evidence>
<evidence type="ECO:0000269" key="9">
    <source>
    </source>
</evidence>
<evidence type="ECO:0000269" key="10">
    <source>
    </source>
</evidence>
<evidence type="ECO:0000269" key="11">
    <source>
    </source>
</evidence>
<evidence type="ECO:0000269" key="12">
    <source>
    </source>
</evidence>
<evidence type="ECO:0000269" key="13">
    <source>
    </source>
</evidence>
<evidence type="ECO:0000269" key="14">
    <source>
    </source>
</evidence>
<evidence type="ECO:0000269" key="15">
    <source>
    </source>
</evidence>
<evidence type="ECO:0000269" key="16">
    <source>
    </source>
</evidence>
<evidence type="ECO:0000269" key="17">
    <source>
    </source>
</evidence>
<evidence type="ECO:0000269" key="18">
    <source>
    </source>
</evidence>
<evidence type="ECO:0000269" key="19">
    <source>
    </source>
</evidence>
<evidence type="ECO:0000269" key="20">
    <source>
    </source>
</evidence>
<evidence type="ECO:0000269" key="21">
    <source>
    </source>
</evidence>
<evidence type="ECO:0000269" key="22">
    <source>
    </source>
</evidence>
<evidence type="ECO:0000303" key="23">
    <source>
    </source>
</evidence>
<evidence type="ECO:0000305" key="24"/>
<evidence type="ECO:0000305" key="25">
    <source>
    </source>
</evidence>
<evidence type="ECO:0000305" key="26">
    <source>
    </source>
</evidence>
<evidence type="ECO:0000305" key="27">
    <source>
    </source>
</evidence>
<evidence type="ECO:0000312" key="28">
    <source>
        <dbReference type="HGNC" id="HGNC:29882"/>
    </source>
</evidence>
<evidence type="ECO:0007744" key="29">
    <source>
        <dbReference type="PDB" id="5WKP"/>
    </source>
</evidence>
<evidence type="ECO:0007744" key="30">
    <source>
        <dbReference type="PDB" id="5WLW"/>
    </source>
</evidence>
<evidence type="ECO:0007744" key="31">
    <source>
        <dbReference type="PDB" id="6NZU"/>
    </source>
</evidence>
<evidence type="ECO:0007744" key="32">
    <source>
        <dbReference type="PDB" id="6UXE"/>
    </source>
</evidence>
<evidence type="ECO:0007744" key="33">
    <source>
        <dbReference type="PDB" id="6W1D"/>
    </source>
</evidence>
<evidence type="ECO:0007744" key="34">
    <source>
        <dbReference type="PDB" id="6WI2"/>
    </source>
</evidence>
<evidence type="ECO:0007744" key="35">
    <source>
        <dbReference type="PDB" id="6WIH"/>
    </source>
</evidence>
<evidence type="ECO:0007744" key="36">
    <source>
        <dbReference type="PDB" id="7RTK"/>
    </source>
</evidence>
<evidence type="ECO:0007744" key="37">
    <source>
    </source>
</evidence>
<evidence type="ECO:0007744" key="38">
    <source>
    </source>
</evidence>
<evidence type="ECO:0007744" key="39">
    <source>
    </source>
</evidence>
<evidence type="ECO:0007744" key="40">
    <source>
    </source>
</evidence>
<evidence type="ECO:0007744" key="41">
    <source>
    </source>
</evidence>
<evidence type="ECO:0007829" key="42">
    <source>
        <dbReference type="PDB" id="5WLW"/>
    </source>
</evidence>
<evidence type="ECO:0007829" key="43">
    <source>
        <dbReference type="PDB" id="6UXE"/>
    </source>
</evidence>
<reference key="1">
    <citation type="journal article" date="2000" name="EMBO J.">
        <title>Distinct iron-sulfur cluster assembly complexes exist in the cytosol and mitochondria of human cells.</title>
        <authorList>
            <person name="Tong W.-H."/>
            <person name="Rouault T."/>
        </authorList>
    </citation>
    <scope>NUCLEOTIDE SEQUENCE [MRNA] (ISOFORMS 1 AND 2)</scope>
    <scope>SUBCELLULAR LOCATION</scope>
    <scope>INTERACTION WITH NFS1</scope>
    <scope>TISSUE SPECIFICITY</scope>
    <scope>VARIANT VAL-12</scope>
</reference>
<reference key="2">
    <citation type="journal article" date="2006" name="Nature">
        <title>The finished DNA sequence of human chromosome 12.</title>
        <authorList>
            <person name="Scherer S.E."/>
            <person name="Muzny D.M."/>
            <person name="Buhay C.J."/>
            <person name="Chen R."/>
            <person name="Cree A."/>
            <person name="Ding Y."/>
            <person name="Dugan-Rocha S."/>
            <person name="Gill R."/>
            <person name="Gunaratne P."/>
            <person name="Harris R.A."/>
            <person name="Hawes A.C."/>
            <person name="Hernandez J."/>
            <person name="Hodgson A.V."/>
            <person name="Hume J."/>
            <person name="Jackson A."/>
            <person name="Khan Z.M."/>
            <person name="Kovar-Smith C."/>
            <person name="Lewis L.R."/>
            <person name="Lozado R.J."/>
            <person name="Metzker M.L."/>
            <person name="Milosavljevic A."/>
            <person name="Miner G.R."/>
            <person name="Montgomery K.T."/>
            <person name="Morgan M.B."/>
            <person name="Nazareth L.V."/>
            <person name="Scott G."/>
            <person name="Sodergren E."/>
            <person name="Song X.-Z."/>
            <person name="Steffen D."/>
            <person name="Lovering R.C."/>
            <person name="Wheeler D.A."/>
            <person name="Worley K.C."/>
            <person name="Yuan Y."/>
            <person name="Zhang Z."/>
            <person name="Adams C.Q."/>
            <person name="Ansari-Lari M.A."/>
            <person name="Ayele M."/>
            <person name="Brown M.J."/>
            <person name="Chen G."/>
            <person name="Chen Z."/>
            <person name="Clerc-Blankenburg K.P."/>
            <person name="Davis C."/>
            <person name="Delgado O."/>
            <person name="Dinh H.H."/>
            <person name="Draper H."/>
            <person name="Gonzalez-Garay M.L."/>
            <person name="Havlak P."/>
            <person name="Jackson L.R."/>
            <person name="Jacob L.S."/>
            <person name="Kelly S.H."/>
            <person name="Li L."/>
            <person name="Li Z."/>
            <person name="Liu J."/>
            <person name="Liu W."/>
            <person name="Lu J."/>
            <person name="Maheshwari M."/>
            <person name="Nguyen B.-V."/>
            <person name="Okwuonu G.O."/>
            <person name="Pasternak S."/>
            <person name="Perez L.M."/>
            <person name="Plopper F.J.H."/>
            <person name="Santibanez J."/>
            <person name="Shen H."/>
            <person name="Tabor P.E."/>
            <person name="Verduzco D."/>
            <person name="Waldron L."/>
            <person name="Wang Q."/>
            <person name="Williams G.A."/>
            <person name="Zhang J."/>
            <person name="Zhou J."/>
            <person name="Allen C.C."/>
            <person name="Amin A.G."/>
            <person name="Anyalebechi V."/>
            <person name="Bailey M."/>
            <person name="Barbaria J.A."/>
            <person name="Bimage K.E."/>
            <person name="Bryant N.P."/>
            <person name="Burch P.E."/>
            <person name="Burkett C.E."/>
            <person name="Burrell K.L."/>
            <person name="Calderon E."/>
            <person name="Cardenas V."/>
            <person name="Carter K."/>
            <person name="Casias K."/>
            <person name="Cavazos I."/>
            <person name="Cavazos S.R."/>
            <person name="Ceasar H."/>
            <person name="Chacko J."/>
            <person name="Chan S.N."/>
            <person name="Chavez D."/>
            <person name="Christopoulos C."/>
            <person name="Chu J."/>
            <person name="Cockrell R."/>
            <person name="Cox C.D."/>
            <person name="Dang M."/>
            <person name="Dathorne S.R."/>
            <person name="David R."/>
            <person name="Davis C.M."/>
            <person name="Davy-Carroll L."/>
            <person name="Deshazo D.R."/>
            <person name="Donlin J.E."/>
            <person name="D'Souza L."/>
            <person name="Eaves K.A."/>
            <person name="Egan A."/>
            <person name="Emery-Cohen A.J."/>
            <person name="Escotto M."/>
            <person name="Flagg N."/>
            <person name="Forbes L.D."/>
            <person name="Gabisi A.M."/>
            <person name="Garza M."/>
            <person name="Hamilton C."/>
            <person name="Henderson N."/>
            <person name="Hernandez O."/>
            <person name="Hines S."/>
            <person name="Hogues M.E."/>
            <person name="Huang M."/>
            <person name="Idlebird D.G."/>
            <person name="Johnson R."/>
            <person name="Jolivet A."/>
            <person name="Jones S."/>
            <person name="Kagan R."/>
            <person name="King L.M."/>
            <person name="Leal B."/>
            <person name="Lebow H."/>
            <person name="Lee S."/>
            <person name="LeVan J.M."/>
            <person name="Lewis L.C."/>
            <person name="London P."/>
            <person name="Lorensuhewa L.M."/>
            <person name="Loulseged H."/>
            <person name="Lovett D.A."/>
            <person name="Lucier A."/>
            <person name="Lucier R.L."/>
            <person name="Ma J."/>
            <person name="Madu R.C."/>
            <person name="Mapua P."/>
            <person name="Martindale A.D."/>
            <person name="Martinez E."/>
            <person name="Massey E."/>
            <person name="Mawhiney S."/>
            <person name="Meador M.G."/>
            <person name="Mendez S."/>
            <person name="Mercado C."/>
            <person name="Mercado I.C."/>
            <person name="Merritt C.E."/>
            <person name="Miner Z.L."/>
            <person name="Minja E."/>
            <person name="Mitchell T."/>
            <person name="Mohabbat F."/>
            <person name="Mohabbat K."/>
            <person name="Montgomery B."/>
            <person name="Moore N."/>
            <person name="Morris S."/>
            <person name="Munidasa M."/>
            <person name="Ngo R.N."/>
            <person name="Nguyen N.B."/>
            <person name="Nickerson E."/>
            <person name="Nwaokelemeh O.O."/>
            <person name="Nwokenkwo S."/>
            <person name="Obregon M."/>
            <person name="Oguh M."/>
            <person name="Oragunye N."/>
            <person name="Oviedo R.J."/>
            <person name="Parish B.J."/>
            <person name="Parker D.N."/>
            <person name="Parrish J."/>
            <person name="Parks K.L."/>
            <person name="Paul H.A."/>
            <person name="Payton B.A."/>
            <person name="Perez A."/>
            <person name="Perrin W."/>
            <person name="Pickens A."/>
            <person name="Primus E.L."/>
            <person name="Pu L.-L."/>
            <person name="Puazo M."/>
            <person name="Quiles M.M."/>
            <person name="Quiroz J.B."/>
            <person name="Rabata D."/>
            <person name="Reeves K."/>
            <person name="Ruiz S.J."/>
            <person name="Shao H."/>
            <person name="Sisson I."/>
            <person name="Sonaike T."/>
            <person name="Sorelle R.P."/>
            <person name="Sutton A.E."/>
            <person name="Svatek A.F."/>
            <person name="Svetz L.A."/>
            <person name="Tamerisa K.S."/>
            <person name="Taylor T.R."/>
            <person name="Teague B."/>
            <person name="Thomas N."/>
            <person name="Thorn R.D."/>
            <person name="Trejos Z.Y."/>
            <person name="Trevino B.K."/>
            <person name="Ukegbu O.N."/>
            <person name="Urban J.B."/>
            <person name="Vasquez L.I."/>
            <person name="Vera V.A."/>
            <person name="Villasana D.M."/>
            <person name="Wang L."/>
            <person name="Ward-Moore S."/>
            <person name="Warren J.T."/>
            <person name="Wei X."/>
            <person name="White F."/>
            <person name="Williamson A.L."/>
            <person name="Wleczyk R."/>
            <person name="Wooden H.S."/>
            <person name="Wooden S.H."/>
            <person name="Yen J."/>
            <person name="Yoon L."/>
            <person name="Yoon V."/>
            <person name="Zorrilla S.E."/>
            <person name="Nelson D."/>
            <person name="Kucherlapati R."/>
            <person name="Weinstock G."/>
            <person name="Gibbs R.A."/>
        </authorList>
    </citation>
    <scope>NUCLEOTIDE SEQUENCE [LARGE SCALE GENOMIC DNA]</scope>
</reference>
<reference key="3">
    <citation type="journal article" date="2004" name="Genome Res.">
        <title>The status, quality, and expansion of the NIH full-length cDNA project: the Mammalian Gene Collection (MGC).</title>
        <authorList>
            <consortium name="The MGC Project Team"/>
        </authorList>
    </citation>
    <scope>NUCLEOTIDE SEQUENCE [LARGE SCALE MRNA] (ISOFORM 1)</scope>
    <scope>VARIANT VAL-12</scope>
    <source>
        <tissue>Brain</tissue>
    </source>
</reference>
<reference key="4">
    <citation type="journal article" date="1996" name="J. Mol. Evol.">
        <title>A modular domain of NifU, a nitrogen fixation cluster protein, is highly conserved in evolution.</title>
        <authorList>
            <person name="Hwang D.M."/>
            <person name="Dempsey A."/>
            <person name="Tan K.-T."/>
            <person name="Liew C.-C."/>
        </authorList>
    </citation>
    <scope>NUCLEOTIDE SEQUENCE [MRNA] OF 47-167</scope>
    <scope>TISSUE SPECIFICITY</scope>
    <source>
        <tissue>Heart</tissue>
    </source>
</reference>
<reference key="5">
    <citation type="journal article" date="2006" name="Cell Metab.">
        <title>Functions of mitochondrial ISCU and cytosolic ISCU in mammalian iron-sulfur cluster biogenesis and iron homeostasis.</title>
        <authorList>
            <person name="Tong W.H."/>
            <person name="Rouault T.A."/>
        </authorList>
    </citation>
    <scope>FUNCTION (ISOFORM 2)</scope>
</reference>
<reference key="6">
    <citation type="journal article" date="2006" name="J. Biol. Chem.">
        <title>Roles of the mammalian cytosolic cysteine desulfurase, ISCS, and scaffold protein, ISCU, in iron-sulfur cluster assembly.</title>
        <authorList>
            <person name="Li K."/>
            <person name="Tong W.H."/>
            <person name="Hughes R.M."/>
            <person name="Rouault T.A."/>
        </authorList>
    </citation>
    <scope>INTERACTION WITH NFS1 (ISOFORM 2)</scope>
    <scope>FUNCTION (ISOFORM 2)</scope>
</reference>
<reference key="7">
    <citation type="journal article" date="2008" name="Am. J. Hum. Genet.">
        <title>Splice mutation in the iron-sulfur cluster scaffold protein ISCU causes myopathy with exercise intolerance.</title>
        <authorList>
            <person name="Mochel F."/>
            <person name="Knight M.A."/>
            <person name="Tong W.-H."/>
            <person name="Hernandez D."/>
            <person name="Ayyad K."/>
            <person name="Taivassalo T."/>
            <person name="Andersen P.M."/>
            <person name="Singleton A."/>
            <person name="Rouault T.A."/>
            <person name="Fischbeck K.H."/>
            <person name="Haller R.G."/>
        </authorList>
    </citation>
    <scope>INVOLVEMENT IN MEIS</scope>
</reference>
<reference key="8">
    <citation type="journal article" date="2010" name="Hum. Mol. Genet.">
        <title>Characterization of the human HSC20, an unusual DnaJ type III protein, involved in iron-sulfur cluster biogenesis.</title>
        <authorList>
            <person name="Uhrigshardt H."/>
            <person name="Singh A."/>
            <person name="Kovtunovych G."/>
            <person name="Ghosh M."/>
            <person name="Rouault T.A."/>
        </authorList>
    </citation>
    <scope>INTERACTION WITH HSCB</scope>
</reference>
<reference key="9">
    <citation type="journal article" date="2011" name="BMC Syst. Biol.">
        <title>Initial characterization of the human central proteome.</title>
        <authorList>
            <person name="Burkard T.R."/>
            <person name="Planyavsky M."/>
            <person name="Kaupe I."/>
            <person name="Breitwieser F.P."/>
            <person name="Buerckstuemmer T."/>
            <person name="Bennett K.L."/>
            <person name="Superti-Furga G."/>
            <person name="Colinge J."/>
        </authorList>
    </citation>
    <scope>IDENTIFICATION BY MASS SPECTROMETRY [LARGE SCALE ANALYSIS]</scope>
</reference>
<reference key="10">
    <citation type="journal article" date="2011" name="PLoS ONE">
        <title>Mammalian frataxin: an essential function for cellular viability through an interaction with a preformed ISCU/NFS1/ISD11 iron-sulfur assembly complex.</title>
        <authorList>
            <person name="Schmucker S."/>
            <person name="Martelli A."/>
            <person name="Colin F."/>
            <person name="Page A."/>
            <person name="Wattenhofer-Donze M."/>
            <person name="Reutenauer L."/>
            <person name="Puccio H."/>
        </authorList>
    </citation>
    <scope>COMPONENT OF CORE (FE-S) CLUSTER ASSEMBLY COMPLEX</scope>
</reference>
<reference key="11">
    <citation type="journal article" date="2013" name="J. Biol. Chem.">
        <title>Mammalian target of rapamycin complex 1 (mTORC1)-mediated phosphorylation stabilizes ISCU protein: implications for iron metabolism.</title>
        <authorList>
            <person name="La P."/>
            <person name="Yang G."/>
            <person name="Dennery P.A."/>
        </authorList>
    </citation>
    <scope>PHOSPHORYLATION AT SER-14</scope>
    <scope>MUTAGENESIS OF SER-14</scope>
</reference>
<reference key="12">
    <citation type="journal article" date="2013" name="J. Biol. Chem.">
        <title>Human mitochondrial chaperone (mtHSP70) and cysteine desulfurase (NFS1) bind preferentially to the disordered conformation, whereas co-chaperone (HSC20) binds to the structured conformation of the iron-sulfur cluster scaffold protein (ISCU).</title>
        <authorList>
            <person name="Cai K."/>
            <person name="Frederick R.O."/>
            <person name="Kim J.H."/>
            <person name="Reinen N.M."/>
            <person name="Tonelli M."/>
            <person name="Markley J.L."/>
        </authorList>
    </citation>
    <scope>INTERACTION WITH HSPA9; NFS1 AND HSC20</scope>
    <scope>FUNCTION</scope>
    <scope>MUTAGENESIS OF ASP-71; ASN-122 AND HIS-137</scope>
    <scope>FUNCTION OF CORE (FE-S) CLUSTER ASSEMBLY COMPLEX</scope>
</reference>
<reference key="13">
    <citation type="journal article" date="2014" name="Biochemistry">
        <title>Human frataxin activates Fe-S cluster biosynthesis by facilitating sulfur transfer chemistry.</title>
        <authorList>
            <person name="Bridwell-Rabb J."/>
            <person name="Fox N.G."/>
            <person name="Tsai C.L."/>
            <person name="Winn A.M."/>
            <person name="Barondeau D.P."/>
        </authorList>
    </citation>
    <scope>MUTAGENESIS OF CYS-69; CYS-95; CYS-130 AND CYS-138</scope>
    <scope>SULFHYDRATION AT CYS-138</scope>
    <scope>FUNCTION OF CORE (FE-S) CLUSTER ASSEMBLY COMPLEX</scope>
</reference>
<reference key="14">
    <citation type="journal article" date="2015" name="Proteomics">
        <title>N-terminome analysis of the human mitochondrial proteome.</title>
        <authorList>
            <person name="Vaca Jacome A.S."/>
            <person name="Rabilloud T."/>
            <person name="Schaeffer-Reiss C."/>
            <person name="Rompais M."/>
            <person name="Ayoub D."/>
            <person name="Lane L."/>
            <person name="Bairoch A."/>
            <person name="Van Dorsselaer A."/>
            <person name="Carapito C."/>
        </authorList>
    </citation>
    <scope>IDENTIFICATION BY MASS SPECTROMETRY [LARGE SCALE ANALYSIS]</scope>
</reference>
<reference key="15">
    <citation type="journal article" date="2016" name="J. Cell. Biochem.">
        <title>Functional analysis of GLRX5 mutants reveals distinct functionalities of GLRX5 protein.</title>
        <authorList>
            <person name="Liu G."/>
            <person name="Wang Y."/>
            <person name="Anderson G.J."/>
            <person name="Camaschella C."/>
            <person name="Chang Y."/>
            <person name="Nie G."/>
        </authorList>
    </citation>
    <scope>INTERACTION WITH GLRX5</scope>
</reference>
<reference key="16">
    <citation type="journal article" date="2016" name="Mitochondrion">
        <title>Mitochondrial Hspa9/Mortalin regulates erythroid differentiation via iron-sulfur cluster assembly.</title>
        <authorList>
            <person name="Shan Y."/>
            <person name="Cortopassi G."/>
        </authorList>
    </citation>
    <scope>INTERACTION WITH HSPA9</scope>
    <scope>SUBCELLULAR LOCATION</scope>
</reference>
<reference key="17">
    <citation type="journal article" date="2018" name="Biochimie">
        <title>Zinc(II) binding on human wild-type ISCU and Met140 variants modulates NFS1 desulfurase activity.</title>
        <authorList>
            <person name="Fox N.G."/>
            <person name="Martelli A."/>
            <person name="Nabhan J.F."/>
            <person name="Janz J."/>
            <person name="Borkowska O."/>
            <person name="Bulawa C."/>
            <person name="Yue W.W."/>
        </authorList>
    </citation>
    <scope>FUNCTION</scope>
    <scope>MUTAGENESIS OF MET-140</scope>
    <scope>FUNCTION OF CORE (FE-S) CLUSTER ASSEMBLY COMPLEX</scope>
</reference>
<reference key="18">
    <citation type="journal article" date="2018" name="Hum. Mol. Genet.">
        <title>Cytosolic HSC20 integrates de novo iron-sulfur cluster biogenesis with the CIAO1-mediated transfer to recipients.</title>
        <authorList>
            <person name="Kim K.S."/>
            <person name="Maio N."/>
            <person name="Singh A."/>
            <person name="Rouault T.A."/>
        </authorList>
    </citation>
    <scope>FUNCTION (ISOFORM 2)</scope>
    <scope>INTERACTION WITH HSCB AND NFS1 (ISOFORM 2)</scope>
</reference>
<reference key="19">
    <citation type="journal article" date="2018" name="J. Inorg. Biochem.">
        <title>Interactions of iron-bound frataxin with ISCU and ferredoxin on the cysteine desulfurase complex leading to Fe-S cluster assembly.</title>
        <authorList>
            <person name="Cai K."/>
            <person name="Frederick R.O."/>
            <person name="Tonelli M."/>
            <person name="Markley J.L."/>
        </authorList>
    </citation>
    <scope>INTERACTION WITH THE CYSTEINE DESULFURASE COMPLEX AND FXN</scope>
    <scope>FUNCTION</scope>
    <scope>FUNCTION OF CORE (FE-S) CLUSTER ASSEMBLY COMPLEX</scope>
</reference>
<reference evidence="29 30" key="20">
    <citation type="journal article" date="2017" name="Nat. Commun.">
        <title>Structure and functional dynamics of the mitochondrial Fe/S cluster synthesis complex.</title>
        <authorList>
            <person name="Boniecki M.T."/>
            <person name="Freibert S.A."/>
            <person name="Muhlenhoff U."/>
            <person name="Lill R."/>
            <person name="Cygler M."/>
        </authorList>
    </citation>
    <scope>X-RAY CRYSTALLOGRAPHY (3.15 ANGSTROMS) OF 1-142 (ISOFORM 2) IN COMPLEX WITH ZINC ION; NFS1 AND LYRM4</scope>
    <scope>SUBUNIT</scope>
    <scope>INTERACTION WITH NFS1</scope>
    <scope>COMPONENT OF CORE (FE-S) CLUSTER ASSEMBLY COMPLEX</scope>
</reference>
<reference evidence="31" key="21">
    <citation type="journal article" date="2019" name="Nat. Commun.">
        <title>Structure of the human frataxin-bound iron-sulfur cluster assembly complex provides insight into its activation mechanism.</title>
        <authorList>
            <person name="Fox N.G."/>
            <person name="Yu X."/>
            <person name="Feng X."/>
            <person name="Bailey H.J."/>
            <person name="Martelli A."/>
            <person name="Nabhan J.F."/>
            <person name="Strain-Damerell C."/>
            <person name="Bulawa C."/>
            <person name="Yue W.W."/>
            <person name="Han S."/>
        </authorList>
    </citation>
    <scope>STRUCTURE BY ELECTRON MICROSCOPY (3.20 ANGSTROMS) OF 34-157 IN COMPLEX WITH ZINC ION; NFS1; LYRM4 AND FXN</scope>
    <scope>SUBUNIT</scope>
    <scope>COMPONENT OF CORE (FE-S) CLUSTER ASSEMBLY COMPLEX</scope>
    <scope>INTERACTION WITH FXN</scope>
</reference>
<reference evidence="32 33 34 35 36" key="22">
    <citation type="journal article" date="2021" name="Nat. Commun.">
        <title>N-terminal tyrosine of ISCU2 triggers [2Fe-2S] cluster synthesis by ISCU2 dimerization.</title>
        <authorList>
            <person name="Freibert S.A."/>
            <person name="Boniecki M.T."/>
            <person name="Stuempfig C."/>
            <person name="Schulz V."/>
            <person name="Krapoth N."/>
            <person name="Winge D.R."/>
            <person name="Muehlenhoff U."/>
            <person name="Stehling O."/>
            <person name="Cygler M."/>
            <person name="Lill R."/>
        </authorList>
    </citation>
    <scope>X-RAY CRYSTALLOGRAPHY (1.57 ANGSTROMS) OF 35-167 IN COMPLEX WITH NFS1 AND LYRM4</scope>
    <scope>MUTAGENESIS OF TYR-35</scope>
    <scope>SUBUNIT</scope>
    <scope>SITE</scope>
    <scope>FUNCTION</scope>
</reference>
<reference key="23">
    <citation type="journal article" date="2008" name="Proc. Natl. Acad. Sci. U.S.A.">
        <title>A quantitative atlas of mitotic phosphorylation.</title>
        <authorList>
            <person name="Dephoure N."/>
            <person name="Zhou C."/>
            <person name="Villen J."/>
            <person name="Beausoleil S.A."/>
            <person name="Bakalarski C.E."/>
            <person name="Elledge S.J."/>
            <person name="Gygi S.P."/>
        </authorList>
    </citation>
    <scope>VARIANT [LARGE SCALE ANALYSIS] VAL-12</scope>
    <scope>IDENTIFICATION BY MASS SPECTROMETRY [LARGE SCALE ANALYSIS]</scope>
    <source>
        <tissue>Cervix carcinoma</tissue>
    </source>
</reference>
<reference key="24">
    <citation type="journal article" date="2009" name="Anal. Chem.">
        <title>Lys-N and trypsin cover complementary parts of the phosphoproteome in a refined SCX-based approach.</title>
        <authorList>
            <person name="Gauci S."/>
            <person name="Helbig A.O."/>
            <person name="Slijper M."/>
            <person name="Krijgsveld J."/>
            <person name="Heck A.J."/>
            <person name="Mohammed S."/>
        </authorList>
    </citation>
    <scope>VARIANT [LARGE SCALE ANALYSIS] VAL-12</scope>
    <scope>IDENTIFICATION BY MASS SPECTROMETRY [LARGE SCALE ANALYSIS]</scope>
</reference>
<reference key="25">
    <citation type="journal article" date="2010" name="Sci. Signal.">
        <title>Quantitative phosphoproteomics reveals widespread full phosphorylation site occupancy during mitosis.</title>
        <authorList>
            <person name="Olsen J.V."/>
            <person name="Vermeulen M."/>
            <person name="Santamaria A."/>
            <person name="Kumar C."/>
            <person name="Miller M.L."/>
            <person name="Jensen L.J."/>
            <person name="Gnad F."/>
            <person name="Cox J."/>
            <person name="Jensen T.S."/>
            <person name="Nigg E.A."/>
            <person name="Brunak S."/>
            <person name="Mann M."/>
        </authorList>
    </citation>
    <scope>VARIANT [LARGE SCALE ANALYSIS] VAL-12</scope>
    <scope>IDENTIFICATION BY MASS SPECTROMETRY [LARGE SCALE ANALYSIS]</scope>
    <source>
        <tissue>Cervix carcinoma</tissue>
    </source>
</reference>
<reference key="26">
    <citation type="journal article" date="2013" name="J. Proteome Res.">
        <title>Toward a comprehensive characterization of a human cancer cell phosphoproteome.</title>
        <authorList>
            <person name="Zhou H."/>
            <person name="Di Palma S."/>
            <person name="Preisinger C."/>
            <person name="Peng M."/>
            <person name="Polat A.N."/>
            <person name="Heck A.J."/>
            <person name="Mohammed S."/>
        </authorList>
    </citation>
    <scope>VARIANT [LARGE SCALE ANALYSIS] VAL-12</scope>
    <scope>IDENTIFICATION BY MASS SPECTROMETRY [LARGE SCALE ANALYSIS]</scope>
    <source>
        <tissue>Cervix carcinoma</tissue>
        <tissue>Erythroleukemia</tissue>
    </source>
</reference>
<reference key="27">
    <citation type="journal article" date="2014" name="J. Proteomics">
        <title>An enzyme assisted RP-RPLC approach for in-depth analysis of human liver phosphoproteome.</title>
        <authorList>
            <person name="Bian Y."/>
            <person name="Song C."/>
            <person name="Cheng K."/>
            <person name="Dong M."/>
            <person name="Wang F."/>
            <person name="Huang J."/>
            <person name="Sun D."/>
            <person name="Wang L."/>
            <person name="Ye M."/>
            <person name="Zou H."/>
        </authorList>
    </citation>
    <scope>VARIANT [LARGE SCALE ANALYSIS] VAL-12</scope>
    <scope>IDENTIFICATION BY MASS SPECTROMETRY [LARGE SCALE ANALYSIS]</scope>
    <source>
        <tissue>Liver</tissue>
    </source>
</reference>
<accession>Q9H1K1</accession>
<accession>Q6P713</accession>
<accession>Q99617</accession>
<accession>Q9H1K2</accession>
<protein>
    <recommendedName>
        <fullName evidence="24">Iron-sulfur cluster assembly enzyme ISCU</fullName>
    </recommendedName>
    <alternativeName>
        <fullName>NifU-like N-terminal domain-containing protein</fullName>
    </alternativeName>
    <alternativeName>
        <fullName>NifU-like protein</fullName>
    </alternativeName>
</protein>
<organism>
    <name type="scientific">Homo sapiens</name>
    <name type="common">Human</name>
    <dbReference type="NCBI Taxonomy" id="9606"/>
    <lineage>
        <taxon>Eukaryota</taxon>
        <taxon>Metazoa</taxon>
        <taxon>Chordata</taxon>
        <taxon>Craniata</taxon>
        <taxon>Vertebrata</taxon>
        <taxon>Euteleostomi</taxon>
        <taxon>Mammalia</taxon>
        <taxon>Eutheria</taxon>
        <taxon>Euarchontoglires</taxon>
        <taxon>Primates</taxon>
        <taxon>Haplorrhini</taxon>
        <taxon>Catarrhini</taxon>
        <taxon>Hominidae</taxon>
        <taxon>Homo</taxon>
    </lineage>
</organism>
<proteinExistence type="evidence at protein level"/>
<comment type="function">
    <molecule>Isoform 1</molecule>
    <text evidence="12 13 18 19 21 25">Mitochondrial scaffold protein, of the core iron-sulfur cluster (ISC) assembly complex, that provides the structural architecture on which the [2Fe-2S] clusters are assembled (PubMed:34824239). The core iron-sulfur cluster (ISC) assembly complex is involved in the de novo synthesis of a [2Fe-2S] cluster, the first step of the mitochondrial iron-sulfur protein biogenesis. This process is initiated by the cysteine desulfurase complex (NFS1:LYRM4:NDUFAB1) that produces persulfide which is delivered on the scaffold protein ISCU in a FXN-dependent manner. Then this complex is stabilized by FDX2 which provides reducing equivalents to accomplish the [2Fe-2S] cluster assembly. Finally, the [2Fe-2S] cluster is transferred from ISCU to chaperone proteins, including HSCB, HSPA9 and GLRX5 (Probable) (PubMed:24971490, PubMed:29576242, PubMed:30031876, PubMed:34824239). Exists as two slow interchanging conformational states, a structured (S) and disordered (D) form (PubMed:23940031). May modulate NFS1 desulfurase activity in a zinc-dependent manner (PubMed:30031876). Modulates the interaction between FXN and the cysteine desulfurase complex (PubMed:29576242).</text>
</comment>
<comment type="function">
    <molecule>Isoform 2</molecule>
    <text evidence="6 7 17">Cytoplasmic scaffold protein, of the cytoplasmic core iron-sulfur cluster (ISC) assembly complex that provides the structural architecture on which the Fe-S clusters are assembled and may be involved in the cytoplasmic iron-sulfur protein biogenesis.</text>
</comment>
<comment type="subunit">
    <molecule>Isoform 1</molecule>
    <text evidence="4 9 10 12 14 15 18 20 21 27">Homodimer; Tyr-35-mediated dimerization of two iron- and sulfide-containing ISCU subunit bind to the cysteine desulfurase complex (PubMed:31101807, PubMed:34824239). Component of the mitochondrial core iron-sulfur cluster (ISC) complex composed of NFS1, LYRM4, NDUFAB1, ISCU, FXN, and FDX2; this complex is an heterohexamer containing two copies of each monomer (Probable) (PubMed:21298097, PubMed:31101807). Interacts (D-state) with NFS1 (homodimer form); each monomer interacts with the C-terminal regions of each NFS1 monomer (PubMed:11060020, PubMed:23940031). Interacts (monomer form) with FXN (via ferrous form); the interaction is possible when both are bound to the dimeric form of the cysteine desulfurase complex (NFS1:LYRM4) and enhances FXN interaction to the dimeric form of the cysteine desulfurase complex (NFS1:LYRM4) (PubMed:29576242, PubMed:31101807). Interacts with GLRX5 (PubMed:26100117). Interacts (D-state) with HSPA9 (PubMed:23940031, PubMed:26702583). Interacts (S-state) with HSCB; this interaction stimulates the ATPase activity of HSPA9 (PubMed:20668094, PubMed:23940031).</text>
</comment>
<comment type="subunit">
    <molecule>Isoform 2</molecule>
    <text evidence="4 7 16 17">Component of the cytoplasmic core iron-sulfur cluster (ISC) complex composed at least of NFS1, LYRM4, and ISCU; this complex interacts with FXN (PubMed:29309586). Monomer; each monomer binds to the C-terminal regions of NFS1 (cytoplasmic and homodimer form) (PubMed:11060020, PubMed:29097656). Interacts with NFS1 (cytoplasmic and homodimer form); this interaction promotes de novo iron-sulfur cluster formation (PubMed:16527810, PubMed:29309586). Interacts with HSCB (cytoplasmic form); this interaction stabilizes the (Fe-S) clusters on ISCU (PubMed:29309586).</text>
</comment>
<comment type="interaction">
    <interactant intactId="EBI-1047335">
        <id>Q9H1K1</id>
    </interactant>
    <interactant intactId="EBI-741181">
        <id>Q6RW13</id>
        <label>AGTRAP</label>
    </interactant>
    <organismsDiffer>false</organismsDiffer>
    <experiments>3</experiments>
</comment>
<comment type="interaction">
    <interactant intactId="EBI-1047335">
        <id>Q9H1K1</id>
    </interactant>
    <interactant intactId="EBI-744695">
        <id>Q8N9N5</id>
        <label>BANP</label>
    </interactant>
    <organismsDiffer>false</organismsDiffer>
    <experiments>3</experiments>
</comment>
<comment type="interaction">
    <interactant intactId="EBI-1047335">
        <id>Q9H1K1</id>
    </interactant>
    <interactant intactId="EBI-11524851">
        <id>Q8NA61-2</id>
        <label>CBY2</label>
    </interactant>
    <organismsDiffer>false</organismsDiffer>
    <experiments>3</experiments>
</comment>
<comment type="interaction">
    <interactant intactId="EBI-1047335">
        <id>Q9H1K1</id>
    </interactant>
    <interactant intactId="EBI-2548868">
        <id>P0C7W6</id>
        <label>CCDC172</label>
    </interactant>
    <organismsDiffer>false</organismsDiffer>
    <experiments>3</experiments>
</comment>
<comment type="interaction">
    <interactant intactId="EBI-1047335">
        <id>Q9H1K1</id>
    </interactant>
    <interactant intactId="EBI-10175124">
        <id>Q8IZU0</id>
        <label>FAM9B</label>
    </interactant>
    <organismsDiffer>false</organismsDiffer>
    <experiments>3</experiments>
</comment>
<comment type="interaction">
    <interactant intactId="EBI-1047335">
        <id>Q9H1K1</id>
    </interactant>
    <interactant intactId="EBI-618309">
        <id>Q08379</id>
        <label>GOLGA2</label>
    </interactant>
    <organismsDiffer>false</organismsDiffer>
    <experiments>3</experiments>
</comment>
<comment type="interaction">
    <interactant intactId="EBI-1047335">
        <id>Q9H1K1</id>
    </interactant>
    <interactant intactId="EBI-5916454">
        <id>A6NEM1</id>
        <label>GOLGA6L9</label>
    </interactant>
    <organismsDiffer>false</organismsDiffer>
    <experiments>3</experiments>
</comment>
<comment type="interaction">
    <interactant intactId="EBI-1047335">
        <id>Q9H1K1</id>
    </interactant>
    <interactant intactId="EBI-748210">
        <id>P00492</id>
        <label>HPRT1</label>
    </interactant>
    <organismsDiffer>false</organismsDiffer>
    <experiments>4</experiments>
</comment>
<comment type="interaction">
    <interactant intactId="EBI-1047335">
        <id>Q9H1K1</id>
    </interactant>
    <interactant intactId="EBI-745305">
        <id>Q13422</id>
        <label>IKZF1</label>
    </interactant>
    <organismsDiffer>false</organismsDiffer>
    <experiments>3</experiments>
</comment>
<comment type="interaction">
    <interactant intactId="EBI-1047335">
        <id>Q9H1K1</id>
    </interactant>
    <interactant intactId="EBI-1047093">
        <id>O76011</id>
        <label>KRT34</label>
    </interactant>
    <organismsDiffer>false</organismsDiffer>
    <experiments>3</experiments>
</comment>
<comment type="interaction">
    <interactant intactId="EBI-1047335">
        <id>Q9H1K1</id>
    </interactant>
    <interactant intactId="EBI-10171697">
        <id>Q6A162</id>
        <label>KRT40</label>
    </interactant>
    <organismsDiffer>false</organismsDiffer>
    <experiments>3</experiments>
</comment>
<comment type="interaction">
    <interactant intactId="EBI-1047335">
        <id>Q9H1K1</id>
    </interactant>
    <interactant intactId="EBI-739832">
        <id>Q8TBB1</id>
        <label>LNX1</label>
    </interactant>
    <organismsDiffer>false</organismsDiffer>
    <experiments>3</experiments>
</comment>
<comment type="interaction">
    <interactant intactId="EBI-1047335">
        <id>Q9H1K1</id>
    </interactant>
    <interactant intactId="EBI-10172526">
        <id>Q9UJV3-2</id>
        <label>MID2</label>
    </interactant>
    <organismsDiffer>false</organismsDiffer>
    <experiments>3</experiments>
</comment>
<comment type="interaction">
    <interactant intactId="EBI-1047335">
        <id>Q9H1K1</id>
    </interactant>
    <interactant intactId="EBI-10172876">
        <id>Q7Z6G3-2</id>
        <label>NECAB2</label>
    </interactant>
    <organismsDiffer>false</organismsDiffer>
    <experiments>3</experiments>
</comment>
<comment type="interaction">
    <interactant intactId="EBI-1047335">
        <id>Q9H1K1</id>
    </interactant>
    <interactant intactId="EBI-347978">
        <id>P37198</id>
        <label>NUP62</label>
    </interactant>
    <organismsDiffer>false</organismsDiffer>
    <experiments>6</experiments>
</comment>
<comment type="interaction">
    <interactant intactId="EBI-1047335">
        <id>Q9H1K1</id>
    </interactant>
    <interactant intactId="EBI-79165">
        <id>Q9NRD5</id>
        <label>PICK1</label>
    </interactant>
    <organismsDiffer>false</organismsDiffer>
    <experiments>3</experiments>
</comment>
<comment type="interaction">
    <interactant intactId="EBI-1047335">
        <id>Q9H1K1</id>
    </interactant>
    <interactant intactId="EBI-1056481">
        <id>P21912</id>
        <label>SDHB</label>
    </interactant>
    <organismsDiffer>false</organismsDiffer>
    <experiments>8</experiments>
</comment>
<comment type="interaction">
    <interactant intactId="EBI-1047335">
        <id>Q9H1K1</id>
    </interactant>
    <interactant intactId="EBI-476295">
        <id>P31947</id>
        <label>SFN</label>
    </interactant>
    <organismsDiffer>false</organismsDiffer>
    <experiments>2</experiments>
</comment>
<comment type="interaction">
    <interactant intactId="EBI-1047335">
        <id>Q9H1K1</id>
    </interactant>
    <interactant intactId="EBI-356498">
        <id>P62258</id>
        <label>YWHAE</label>
    </interactant>
    <organismsDiffer>false</organismsDiffer>
    <experiments>3</experiments>
</comment>
<comment type="subcellular location">
    <molecule>Isoform 1</molecule>
    <subcellularLocation>
        <location evidence="4 15">Mitochondrion</location>
    </subcellularLocation>
</comment>
<comment type="subcellular location">
    <molecule>Isoform 2</molecule>
    <subcellularLocation>
        <location>Cytoplasm</location>
    </subcellularLocation>
    <subcellularLocation>
        <location evidence="4">Nucleus</location>
    </subcellularLocation>
</comment>
<comment type="alternative products">
    <event type="alternative splicing"/>
    <isoform>
        <id>Q9H1K1-1</id>
        <name>1</name>
        <name>ISCU2</name>
        <sequence type="displayed"/>
    </isoform>
    <isoform>
        <id>Q9H1K1-2</id>
        <name>2</name>
        <name>ISCU1</name>
        <sequence type="described" ref="VSP_013492"/>
    </isoform>
</comment>
<comment type="tissue specificity">
    <text evidence="4 22">Detected in heart, liver, skeletal muscle, brain, pancreas, kidney, lung and placenta.</text>
</comment>
<comment type="PTM">
    <text evidence="11">Phosphorylation at Ser-14 is required for ISCU protein stabilization in the cytosol, whereas dephosphorylation of Ser-14, due to the inhibition of mTORC1 (mammalian target of rapamycin complex 1) complex, leads to degradation of the precursor form and ultimately to a decrease in the mitochondrial mature form.</text>
</comment>
<comment type="PTM">
    <text evidence="2">Cysteine persulfide is reduced by thiol-containing molecules such as glutathione and L-cysteine.</text>
</comment>
<comment type="disease" evidence="8">
    <disease id="DI-02019">
        <name>Myopathy with exercise intolerance Swedish type</name>
        <acronym>MEIS</acronym>
        <description>Autosomal recessive metabolic disease characterized by lifelong severe exercise intolerance, in which minor exertion causes fatigue of active muscles, shortness of breath, and cardiac palpitations in association with lactic acidosis. The biochemical phenotype is characterized by a deficiency in mitochondrial iron-sulfur proteins and impaired muscle oxidative metabolism.</description>
        <dbReference type="MIM" id="255125"/>
    </disease>
    <text>The disease is caused by variants affecting the gene represented in this entry.</text>
</comment>
<comment type="similarity">
    <text evidence="24">Belongs to the NifU family.</text>
</comment>
<comment type="caution">
    <molecule>Isoform 1</molecule>
    <text evidence="6 7 12 21">Previous publications report that ISCU could provide the architecture on which both [2Fe-2S] and [4Fe-4S] clusters could be assembled (PubMed:16517407, PubMed:16527810, PubMed:23940031). Recent reports confirm that only [2Fe-2S] clusters are formed by the core ISC assembly complex (PubMed:34824239).</text>
</comment>
<sequence length="167" mass="17999">MAAAGAFRLRRAASALLLRSPRLPARELSAPARLYHKKVVDHYENPRNVGSLDKTSKNVGTGLVGAPACGDVMKLQIQVDEKGKIVDARFKTFGCGSAIASSSLATEWVKGKTVEEALTIKNTDIAKELCLPPVKLHCSMLAEDAIKAALADYKLKQEPKKGEAEKK</sequence>
<keyword id="KW-0002">3D-structure</keyword>
<keyword id="KW-0025">Alternative splicing</keyword>
<keyword id="KW-0963">Cytoplasm</keyword>
<keyword id="KW-0408">Iron</keyword>
<keyword id="KW-0479">Metal-binding</keyword>
<keyword id="KW-0496">Mitochondrion</keyword>
<keyword id="KW-0539">Nucleus</keyword>
<keyword id="KW-0597">Phosphoprotein</keyword>
<keyword id="KW-1267">Proteomics identification</keyword>
<keyword id="KW-1185">Reference proteome</keyword>
<keyword id="KW-0809">Transit peptide</keyword>
<feature type="transit peptide" description="Mitochondrion" evidence="3">
    <location>
        <begin position="1"/>
        <end position="34"/>
    </location>
</feature>
<feature type="chain" id="PRO_0000019692" description="Iron-sulfur cluster assembly enzyme ISCU">
    <location>
        <begin position="35"/>
        <end position="167"/>
    </location>
</feature>
<feature type="active site" description="Cysteine persulfide intermediate" evidence="2">
    <location>
        <position position="69"/>
    </location>
</feature>
<feature type="active site" description="Cysteine persulfide intermediate" evidence="1">
    <location>
        <position position="138"/>
    </location>
</feature>
<feature type="binding site" evidence="20 31">
    <location>
        <position position="71"/>
    </location>
    <ligand>
        <name>Zn(2+)</name>
        <dbReference type="ChEBI" id="CHEBI:29105"/>
    </ligand>
</feature>
<feature type="binding site" evidence="20 31">
    <location>
        <position position="95"/>
    </location>
    <ligand>
        <name>Zn(2+)</name>
        <dbReference type="ChEBI" id="CHEBI:29105"/>
    </ligand>
</feature>
<feature type="binding site" evidence="20 31">
    <location>
        <position position="138"/>
    </location>
    <ligand>
        <name>Zn(2+)</name>
        <dbReference type="ChEBI" id="CHEBI:29105"/>
    </ligand>
</feature>
<feature type="site" description="Mediates ISCU dimerization and de novo [2Fe-2S] cluster assembly" evidence="21">
    <location>
        <position position="35"/>
    </location>
</feature>
<feature type="modified residue" description="Phosphoserine; by MTOR" evidence="11">
    <location>
        <position position="14"/>
    </location>
</feature>
<feature type="modified residue" description="Cysteine persulfide" evidence="2">
    <location>
        <position position="69"/>
    </location>
</feature>
<feature type="modified residue" description="Cysteine persulfide" evidence="26">
    <location>
        <position position="138"/>
    </location>
</feature>
<feature type="splice variant" id="VSP_013492" description="In isoform 2." evidence="23">
    <original>MAAAGAFRLRRAASALLLRSPRLPARELSAPARLYHKK</original>
    <variation>MVLIDMSVDLSTQ</variation>
    <location>
        <begin position="1"/>
        <end position="38"/>
    </location>
</feature>
<feature type="sequence variant" id="VAR_060728" description="In dbSNP:rs2287555." evidence="4 5 37 38 39 40 41">
    <original>A</original>
    <variation>V</variation>
    <location>
        <position position="12"/>
    </location>
</feature>
<feature type="mutagenesis site" description="Loss of phosphorylation. Does not affect phosphorylation." evidence="11">
    <original>S</original>
    <variation>A</variation>
    <location>
        <position position="14"/>
    </location>
</feature>
<feature type="mutagenesis site" description="Does not affect mitochondrial localization. Loss of iron-sulfur cluster biogenesis. Does not affect reductive cleavage of the ISCU2-bound-persulfide by FDX2." evidence="21">
    <original>Y</original>
    <variation>A</variation>
    <location>
        <position position="35"/>
    </location>
</feature>
<feature type="mutagenesis site" description="Does not affect ISC complex formation. Does not affect the unstimulated cysteine desulfurase activity in the absence of FXN. Does not affect the cysteine desulfurase activity in the presence of FXN. Slightly decreases the cysteine desulfurase activity in the presence of FXN; when associated with A-95. Does not affect iron based stimulation of the cysteine desulfurase activity in the presence of FXN. Does not affect iron based stimulation of the cysteine desulfurase activity in the presence of FXN; when associated with A-95. Loss of the [2Fe-2S] cluster formation.">
    <original>C</original>
    <variation>A</variation>
    <location>
        <position position="69"/>
    </location>
</feature>
<feature type="mutagenesis site" description="Does not affect the cysteine desulfurase activity in the presence of FXN. Does not affect iron based stimulation of the cysteine desulfurase activity in the presence of FXN." evidence="13">
    <original>C</original>
    <variation>S</variation>
    <location>
        <position position="69"/>
    </location>
</feature>
<feature type="mutagenesis site" description="Stabilizes the D-state." evidence="12">
    <original>D</original>
    <variation>A</variation>
    <location>
        <position position="71"/>
    </location>
</feature>
<feature type="mutagenesis site" description="Stabilizes the S-state." evidence="12">
    <original>D</original>
    <variation>V</variation>
    <location>
        <position position="71"/>
    </location>
</feature>
<feature type="mutagenesis site" description="Does not affect ISC complex formation. Does not affect the unstimulated cysteine desulfurase activity in the absence of FXN. Does not affect the cysteine desulfurase activity in the presence of FXN. Slightly decreases the cysteine desulfurase activity in the presence of FXN; when associated with A-95. Does not affect iron based stimulation of the cysteine desulfurase activity in the presence of FXN. Does not affect iron based stimulation of the cysteine desulfurase activity in the presence of FXN; when associated with A.69. Loss of the [2Fe-2S] cluster formation." evidence="13">
    <original>C</original>
    <variation>A</variation>
    <location>
        <position position="95"/>
    </location>
</feature>
<feature type="mutagenesis site" description="Slightly decrease the cysteine desulfurase activity in the presence of FXN. Does not affect iron based stimulation of the cysteine desulfurase activity in the presence of FXN." evidence="13">
    <original>C</original>
    <variation>S</variation>
    <location>
        <position position="95"/>
    </location>
</feature>
<feature type="mutagenesis site" description="Stabilizes the S-state." evidence="12">
    <original>N</original>
    <variation>A</variation>
    <location>
        <position position="122"/>
    </location>
</feature>
<feature type="mutagenesis site" description="Does not affect the unstimulated cysteine desulfurase activity in the absence of FXN. Does not affect the cysteine desulfurase activity in the presence of FXN. Does not affect iron based stimulation of the cysteine desulfurase activity in the presence of FXN. Does not affect the [2Fe-2S] cluster assembly." evidence="13">
    <original>C</original>
    <variation>S</variation>
    <location>
        <position position="130"/>
    </location>
</feature>
<feature type="mutagenesis site" description="Stabilizes the D-state." evidence="12">
    <original>H</original>
    <variation>A</variation>
    <location>
        <position position="137"/>
    </location>
</feature>
<feature type="mutagenesis site" description="Does not affect ISC complex formation. Does not affect the unstimulated cysteine desulfurase activity in the absence of FXN. Loss of iron-based stimulation of the cysteine desulfurase activity in the presence of FXN. Loss of the [2Fe-2S] cluster formation." evidence="13">
    <original>C</original>
    <variation>A</variation>
    <location>
        <position position="138"/>
    </location>
</feature>
<feature type="mutagenesis site" description="Loss of iron-based stimulation of the cysteine desulfurase activity in the presence of FXN." evidence="13">
    <original>C</original>
    <variation>S</variation>
    <location>
        <position position="138"/>
    </location>
</feature>
<feature type="mutagenesis site" description="Does not affect the SDA complex formation. Abolishes desulfurase activity of SDA complex when zinc ion is bound. Activated by FXN when component of SDAU complex." evidence="19">
    <original>M</original>
    <variation>I</variation>
    <location>
        <position position="140"/>
    </location>
</feature>
<feature type="mutagenesis site" description="Does not affect the SDA complex formation. Abolishes desulfurase activity of SDA complex when zinc ion is bound. Activated by FXN when component of SDAU complex." evidence="19">
    <original>M</original>
    <variation>L</variation>
    <location>
        <position position="140"/>
    </location>
</feature>
<feature type="mutagenesis site" description="Does not affect the SDA complex formation. Abolishes desulfurase activity of SDA complex when zinc ion is bound. Activated by FXN when component of SDAU complex." evidence="19">
    <original>M</original>
    <variation>V</variation>
    <location>
        <position position="140"/>
    </location>
</feature>
<feature type="sequence conflict" description="In Ref. 1; AAG37428 and 3; AAH11906." evidence="24" ref="1 3">
    <original>F</original>
    <variation>G</variation>
    <location>
        <position position="7"/>
    </location>
</feature>
<feature type="helix" evidence="43">
    <location>
        <begin position="37"/>
        <end position="44"/>
    </location>
</feature>
<feature type="strand" evidence="43">
    <location>
        <begin position="48"/>
        <end position="50"/>
    </location>
</feature>
<feature type="helix" evidence="42">
    <location>
        <begin position="54"/>
        <end position="56"/>
    </location>
</feature>
<feature type="strand" evidence="43">
    <location>
        <begin position="59"/>
        <end position="66"/>
    </location>
</feature>
<feature type="helix" evidence="43">
    <location>
        <begin position="67"/>
        <end position="69"/>
    </location>
</feature>
<feature type="strand" evidence="43">
    <location>
        <begin position="71"/>
        <end position="79"/>
    </location>
</feature>
<feature type="strand" evidence="43">
    <location>
        <begin position="83"/>
        <end position="94"/>
    </location>
</feature>
<feature type="helix" evidence="43">
    <location>
        <begin position="96"/>
        <end position="109"/>
    </location>
</feature>
<feature type="helix" evidence="43">
    <location>
        <begin position="114"/>
        <end position="117"/>
    </location>
</feature>
<feature type="helix" evidence="43">
    <location>
        <begin position="122"/>
        <end position="129"/>
    </location>
</feature>
<feature type="helix" evidence="43">
    <location>
        <begin position="133"/>
        <end position="135"/>
    </location>
</feature>
<feature type="helix" evidence="43">
    <location>
        <begin position="136"/>
        <end position="157"/>
    </location>
</feature>
<feature type="binding site" evidence="16 30">
    <location sequence="Q9H1K1-2">
        <position position="46"/>
    </location>
    <ligand>
        <name>Zn(2+)</name>
        <dbReference type="ChEBI" id="CHEBI:29105"/>
        <note>ligand shared with NFS1</note>
    </ligand>
</feature>
<feature type="binding site" evidence="16 30">
    <location sequence="Q9H1K1-2">
        <position position="70"/>
    </location>
    <ligand>
        <name>Zn(2+)</name>
        <dbReference type="ChEBI" id="CHEBI:29105"/>
        <note>ligand shared with NFS1</note>
    </ligand>
</feature>
<feature type="binding site" evidence="16 30">
    <location sequence="Q9H1K1-2">
        <position position="112"/>
    </location>
    <ligand>
        <name>Zn(2+)</name>
        <dbReference type="ChEBI" id="CHEBI:29105"/>
        <note>ligand shared with NFS1</note>
    </ligand>
</feature>
<gene>
    <name evidence="28" type="primary">ISCU</name>
    <name type="synonym">NIFUN</name>
</gene>
<dbReference type="EMBL" id="AY009127">
    <property type="protein sequence ID" value="AAG37427.1"/>
    <property type="molecule type" value="mRNA"/>
</dbReference>
<dbReference type="EMBL" id="AY009128">
    <property type="protein sequence ID" value="AAG37428.1"/>
    <property type="molecule type" value="mRNA"/>
</dbReference>
<dbReference type="EMBL" id="AC008119">
    <property type="status" value="NOT_ANNOTATED_CDS"/>
    <property type="molecule type" value="Genomic_DNA"/>
</dbReference>
<dbReference type="EMBL" id="BC011906">
    <property type="protein sequence ID" value="AAH11906.1"/>
    <property type="molecule type" value="mRNA"/>
</dbReference>
<dbReference type="EMBL" id="BC061903">
    <property type="protein sequence ID" value="AAH61903.1"/>
    <property type="molecule type" value="mRNA"/>
</dbReference>
<dbReference type="EMBL" id="U47101">
    <property type="protein sequence ID" value="AAC50885.1"/>
    <property type="molecule type" value="mRNA"/>
</dbReference>
<dbReference type="CCDS" id="CCDS44966.1">
    <molecule id="Q9H1K1-1"/>
</dbReference>
<dbReference type="CCDS" id="CCDS9118.1">
    <molecule id="Q9H1K1-2"/>
</dbReference>
<dbReference type="RefSeq" id="NP_001306971.1">
    <property type="nucleotide sequence ID" value="NM_001320042.1"/>
</dbReference>
<dbReference type="RefSeq" id="NP_055116.1">
    <molecule id="Q9H1K1-2"/>
    <property type="nucleotide sequence ID" value="NM_014301.4"/>
</dbReference>
<dbReference type="RefSeq" id="NP_998760.1">
    <molecule id="Q9H1K1-1"/>
    <property type="nucleotide sequence ID" value="NM_213595.4"/>
</dbReference>
<dbReference type="PDB" id="5KZ5">
    <property type="method" value="EM"/>
    <property type="resolution" value="14.30 A"/>
    <property type="chains" value="a/b/c/d/e/f/g/h/i/j/k/l=50-167"/>
</dbReference>
<dbReference type="PDB" id="5WKP">
    <property type="method" value="X-ray"/>
    <property type="resolution" value="3.15 A"/>
    <property type="chains" value="D/H=38-167"/>
</dbReference>
<dbReference type="PDB" id="5WLW">
    <property type="method" value="X-ray"/>
    <property type="resolution" value="3.32 A"/>
    <property type="chains" value="D/H=38-167"/>
</dbReference>
<dbReference type="PDB" id="6NZU">
    <property type="method" value="EM"/>
    <property type="resolution" value="3.20 A"/>
    <property type="chains" value="D/H=34-157"/>
</dbReference>
<dbReference type="PDB" id="6UXE">
    <property type="method" value="X-ray"/>
    <property type="resolution" value="1.57 A"/>
    <property type="chains" value="D=35-167"/>
</dbReference>
<dbReference type="PDB" id="6W1D">
    <property type="method" value="X-ray"/>
    <property type="resolution" value="1.79 A"/>
    <property type="chains" value="D=35-167"/>
</dbReference>
<dbReference type="PDB" id="6WI2">
    <property type="method" value="X-ray"/>
    <property type="resolution" value="1.95 A"/>
    <property type="chains" value="D=35-167"/>
</dbReference>
<dbReference type="PDB" id="6WIH">
    <property type="method" value="X-ray"/>
    <property type="resolution" value="1.90 A"/>
    <property type="chains" value="D=35-167"/>
</dbReference>
<dbReference type="PDB" id="7RTK">
    <property type="method" value="X-ray"/>
    <property type="resolution" value="2.50 A"/>
    <property type="chains" value="D=35-167"/>
</dbReference>
<dbReference type="PDB" id="8PK8">
    <property type="method" value="EM"/>
    <property type="resolution" value="2.49 A"/>
    <property type="chains" value="D=35-167"/>
</dbReference>
<dbReference type="PDB" id="8PK9">
    <property type="method" value="EM"/>
    <property type="resolution" value="2.58 A"/>
    <property type="chains" value="D=35-167"/>
</dbReference>
<dbReference type="PDB" id="8PKA">
    <property type="method" value="EM"/>
    <property type="resolution" value="2.75 A"/>
    <property type="chains" value="D=35-167"/>
</dbReference>
<dbReference type="PDB" id="8RMC">
    <property type="method" value="EM"/>
    <property type="resolution" value="2.26 A"/>
    <property type="chains" value="D/H=35-167"/>
</dbReference>
<dbReference type="PDB" id="8RMD">
    <property type="method" value="EM"/>
    <property type="resolution" value="2.52 A"/>
    <property type="chains" value="D/H=35-167"/>
</dbReference>
<dbReference type="PDB" id="8RME">
    <property type="method" value="EM"/>
    <property type="resolution" value="2.49 A"/>
    <property type="chains" value="D/H=35-167"/>
</dbReference>
<dbReference type="PDB" id="8RMF">
    <property type="method" value="EM"/>
    <property type="resolution" value="2.33 A"/>
    <property type="chains" value="D/H=35-167"/>
</dbReference>
<dbReference type="PDB" id="8RMG">
    <property type="method" value="EM"/>
    <property type="resolution" value="2.46 A"/>
    <property type="chains" value="D/H=35-167"/>
</dbReference>
<dbReference type="PDB" id="8TVT">
    <property type="method" value="X-ray"/>
    <property type="resolution" value="2.00 A"/>
    <property type="chains" value="D=35-167"/>
</dbReference>
<dbReference type="PDBsum" id="5KZ5"/>
<dbReference type="PDBsum" id="5WKP"/>
<dbReference type="PDBsum" id="5WLW"/>
<dbReference type="PDBsum" id="6NZU"/>
<dbReference type="PDBsum" id="6UXE"/>
<dbReference type="PDBsum" id="6W1D"/>
<dbReference type="PDBsum" id="6WI2"/>
<dbReference type="PDBsum" id="6WIH"/>
<dbReference type="PDBsum" id="7RTK"/>
<dbReference type="PDBsum" id="8PK8"/>
<dbReference type="PDBsum" id="8PK9"/>
<dbReference type="PDBsum" id="8PKA"/>
<dbReference type="PDBsum" id="8RMC"/>
<dbReference type="PDBsum" id="8RMD"/>
<dbReference type="PDBsum" id="8RME"/>
<dbReference type="PDBsum" id="8RMF"/>
<dbReference type="PDBsum" id="8RMG"/>
<dbReference type="PDBsum" id="8TVT"/>
<dbReference type="BMRB" id="Q9H1K1"/>
<dbReference type="EMDB" id="EMD-0560"/>
<dbReference type="EMDB" id="EMD-17732"/>
<dbReference type="EMDB" id="EMD-17733"/>
<dbReference type="EMDB" id="EMD-17734"/>
<dbReference type="EMDB" id="EMD-19356"/>
<dbReference type="EMDB" id="EMD-19357"/>
<dbReference type="EMDB" id="EMD-19359"/>
<dbReference type="EMDB" id="EMD-19360"/>
<dbReference type="EMDB" id="EMD-19361"/>
<dbReference type="EMDB" id="EMD-8301"/>
<dbReference type="SASBDB" id="Q9H1K1"/>
<dbReference type="SMR" id="Q9H1K1"/>
<dbReference type="BioGRID" id="117038">
    <property type="interactions" value="51"/>
</dbReference>
<dbReference type="ComplexPortal" id="CPX-5641">
    <property type="entry name" value="Mitochondrial NIAUFX iron-sulfur cluster assembly complex"/>
</dbReference>
<dbReference type="CORUM" id="Q9H1K1"/>
<dbReference type="DIP" id="DIP-39616N"/>
<dbReference type="FunCoup" id="Q9H1K1">
    <property type="interactions" value="2720"/>
</dbReference>
<dbReference type="IntAct" id="Q9H1K1">
    <property type="interactions" value="37"/>
</dbReference>
<dbReference type="MINT" id="Q9H1K1"/>
<dbReference type="STRING" id="9606.ENSP00000310623"/>
<dbReference type="GlyGen" id="Q9H1K1">
    <property type="glycosylation" value="1 site, 1 O-linked glycan (1 site)"/>
</dbReference>
<dbReference type="iPTMnet" id="Q9H1K1"/>
<dbReference type="MetOSite" id="Q9H1K1"/>
<dbReference type="PhosphoSitePlus" id="Q9H1K1"/>
<dbReference type="BioMuta" id="ISCU"/>
<dbReference type="DMDM" id="313104118"/>
<dbReference type="jPOST" id="Q9H1K1"/>
<dbReference type="MassIVE" id="Q9H1K1"/>
<dbReference type="PaxDb" id="9606-ENSP00000310623"/>
<dbReference type="PeptideAtlas" id="Q9H1K1"/>
<dbReference type="ProteomicsDB" id="80422">
    <molecule id="Q9H1K1-1"/>
</dbReference>
<dbReference type="ProteomicsDB" id="80423">
    <molecule id="Q9H1K1-2"/>
</dbReference>
<dbReference type="Pumba" id="Q9H1K1"/>
<dbReference type="TopDownProteomics" id="Q9H1K1-1">
    <molecule id="Q9H1K1-1"/>
</dbReference>
<dbReference type="Antibodypedia" id="30765">
    <property type="antibodies" value="274 antibodies from 28 providers"/>
</dbReference>
<dbReference type="DNASU" id="23479"/>
<dbReference type="Ensembl" id="ENST00000311893.14">
    <molecule id="Q9H1K1-1"/>
    <property type="protein sequence ID" value="ENSP00000310623.9"/>
    <property type="gene ID" value="ENSG00000136003.16"/>
</dbReference>
<dbReference type="Ensembl" id="ENST00000392807.8">
    <molecule id="Q9H1K1-2"/>
    <property type="protein sequence ID" value="ENSP00000376554.4"/>
    <property type="gene ID" value="ENSG00000136003.16"/>
</dbReference>
<dbReference type="GeneID" id="23479"/>
<dbReference type="KEGG" id="hsa:23479"/>
<dbReference type="MANE-Select" id="ENST00000311893.14">
    <property type="protein sequence ID" value="ENSP00000310623.9"/>
    <property type="RefSeq nucleotide sequence ID" value="NM_213595.4"/>
    <property type="RefSeq protein sequence ID" value="NP_998760.1"/>
</dbReference>
<dbReference type="UCSC" id="uc001tnc.5">
    <molecule id="Q9H1K1-1"/>
    <property type="organism name" value="human"/>
</dbReference>
<dbReference type="AGR" id="HGNC:29882"/>
<dbReference type="CTD" id="23479"/>
<dbReference type="DisGeNET" id="23479"/>
<dbReference type="GeneCards" id="ISCU"/>
<dbReference type="HGNC" id="HGNC:29882">
    <property type="gene designation" value="ISCU"/>
</dbReference>
<dbReference type="HPA" id="ENSG00000136003">
    <property type="expression patterns" value="Low tissue specificity"/>
</dbReference>
<dbReference type="MalaCards" id="ISCU"/>
<dbReference type="MIM" id="255125">
    <property type="type" value="phenotype"/>
</dbReference>
<dbReference type="MIM" id="611911">
    <property type="type" value="gene"/>
</dbReference>
<dbReference type="neXtProt" id="NX_Q9H1K1"/>
<dbReference type="OpenTargets" id="ENSG00000136003"/>
<dbReference type="Orphanet" id="43115">
    <property type="disease" value="Hereditary myopathy with lactic acidosis due to ISCU deficiency"/>
</dbReference>
<dbReference type="PharmGKB" id="PA162392328"/>
<dbReference type="VEuPathDB" id="HostDB:ENSG00000136003"/>
<dbReference type="eggNOG" id="KOG3361">
    <property type="taxonomic scope" value="Eukaryota"/>
</dbReference>
<dbReference type="GeneTree" id="ENSGT00390000015813"/>
<dbReference type="HOGENOM" id="CLU_079283_1_2_1"/>
<dbReference type="InParanoid" id="Q9H1K1"/>
<dbReference type="OMA" id="SMVTEMV"/>
<dbReference type="OrthoDB" id="1925777at2759"/>
<dbReference type="PAN-GO" id="Q9H1K1">
    <property type="GO annotations" value="5 GO annotations based on evolutionary models"/>
</dbReference>
<dbReference type="PhylomeDB" id="Q9H1K1"/>
<dbReference type="TreeFam" id="TF105422"/>
<dbReference type="PathwayCommons" id="Q9H1K1"/>
<dbReference type="Reactome" id="R-HSA-1362409">
    <molecule id="Q9H1K1-1"/>
    <property type="pathway name" value="Mitochondrial iron-sulfur cluster biogenesis"/>
</dbReference>
<dbReference type="Reactome" id="R-HSA-9694301">
    <property type="pathway name" value="Maturation of replicase proteins"/>
</dbReference>
<dbReference type="Reactome" id="R-HSA-9854311">
    <molecule id="Q9H1K1-1"/>
    <property type="pathway name" value="Maturation of TCA enzymes and regulation of TCA cycle"/>
</dbReference>
<dbReference type="Reactome" id="R-HSA-9865881">
    <molecule id="Q9H1K1-1"/>
    <property type="pathway name" value="Complex III assembly"/>
</dbReference>
<dbReference type="SignaLink" id="Q9H1K1"/>
<dbReference type="SIGNOR" id="Q9H1K1"/>
<dbReference type="BioGRID-ORCS" id="23479">
    <property type="hits" value="787 hits in 1130 CRISPR screens"/>
</dbReference>
<dbReference type="ChiTaRS" id="ISCU">
    <property type="organism name" value="human"/>
</dbReference>
<dbReference type="GeneWiki" id="ISCU"/>
<dbReference type="GenomeRNAi" id="23479"/>
<dbReference type="Pharos" id="Q9H1K1">
    <property type="development level" value="Tbio"/>
</dbReference>
<dbReference type="PRO" id="PR:Q9H1K1"/>
<dbReference type="Proteomes" id="UP000005640">
    <property type="component" value="Chromosome 12"/>
</dbReference>
<dbReference type="RNAct" id="Q9H1K1">
    <property type="molecule type" value="protein"/>
</dbReference>
<dbReference type="Bgee" id="ENSG00000136003">
    <property type="expression patterns" value="Expressed in heart right ventricle and 211 other cell types or tissues"/>
</dbReference>
<dbReference type="ExpressionAtlas" id="Q9H1K1">
    <property type="expression patterns" value="baseline and differential"/>
</dbReference>
<dbReference type="GO" id="GO:0005737">
    <property type="term" value="C:cytoplasm"/>
    <property type="evidence" value="ECO:0000314"/>
    <property type="project" value="UniProtKB"/>
</dbReference>
<dbReference type="GO" id="GO:0005829">
    <property type="term" value="C:cytosol"/>
    <property type="evidence" value="ECO:0000314"/>
    <property type="project" value="HGNC-UCL"/>
</dbReference>
<dbReference type="GO" id="GO:1990229">
    <property type="term" value="C:iron-sulfur cluster assembly complex"/>
    <property type="evidence" value="ECO:0000303"/>
    <property type="project" value="ComplexPortal"/>
</dbReference>
<dbReference type="GO" id="GO:0099128">
    <property type="term" value="C:mitochondrial [2Fe-2S] assembly complex"/>
    <property type="evidence" value="ECO:0000314"/>
    <property type="project" value="UniProtKB"/>
</dbReference>
<dbReference type="GO" id="GO:0005759">
    <property type="term" value="C:mitochondrial matrix"/>
    <property type="evidence" value="ECO:0000318"/>
    <property type="project" value="GO_Central"/>
</dbReference>
<dbReference type="GO" id="GO:0005739">
    <property type="term" value="C:mitochondrion"/>
    <property type="evidence" value="ECO:0000314"/>
    <property type="project" value="UniProtKB"/>
</dbReference>
<dbReference type="GO" id="GO:0005634">
    <property type="term" value="C:nucleus"/>
    <property type="evidence" value="ECO:0000304"/>
    <property type="project" value="HGNC-UCL"/>
</dbReference>
<dbReference type="GO" id="GO:0051537">
    <property type="term" value="F:2 iron, 2 sulfur cluster binding"/>
    <property type="evidence" value="ECO:0000318"/>
    <property type="project" value="GO_Central"/>
</dbReference>
<dbReference type="GO" id="GO:0008198">
    <property type="term" value="F:ferrous iron binding"/>
    <property type="evidence" value="ECO:0000314"/>
    <property type="project" value="FlyBase"/>
</dbReference>
<dbReference type="GO" id="GO:0005506">
    <property type="term" value="F:iron ion binding"/>
    <property type="evidence" value="ECO:0000304"/>
    <property type="project" value="UniProtKB"/>
</dbReference>
<dbReference type="GO" id="GO:0140132">
    <property type="term" value="F:iron-sulfur cluster chaperone activity"/>
    <property type="evidence" value="ECO:0000314"/>
    <property type="project" value="FlyBase"/>
</dbReference>
<dbReference type="GO" id="GO:0060090">
    <property type="term" value="F:molecular adaptor activity"/>
    <property type="evidence" value="ECO:0000314"/>
    <property type="project" value="HGNC-UCL"/>
</dbReference>
<dbReference type="GO" id="GO:0042803">
    <property type="term" value="F:protein homodimerization activity"/>
    <property type="evidence" value="ECO:0000314"/>
    <property type="project" value="UniProtKB"/>
</dbReference>
<dbReference type="GO" id="GO:0008270">
    <property type="term" value="F:zinc ion binding"/>
    <property type="evidence" value="ECO:0000314"/>
    <property type="project" value="UniProtKB"/>
</dbReference>
<dbReference type="GO" id="GO:0044571">
    <property type="term" value="P:[2Fe-2S] cluster assembly"/>
    <property type="evidence" value="ECO:0000314"/>
    <property type="project" value="UniProtKB"/>
</dbReference>
<dbReference type="GO" id="GO:0044572">
    <property type="term" value="P:[4Fe-4S] cluster assembly"/>
    <property type="evidence" value="ECO:0000314"/>
    <property type="project" value="UniProtKB"/>
</dbReference>
<dbReference type="GO" id="GO:0006879">
    <property type="term" value="P:intracellular iron ion homeostasis"/>
    <property type="evidence" value="ECO:0000314"/>
    <property type="project" value="UniProtKB"/>
</dbReference>
<dbReference type="GO" id="GO:0016226">
    <property type="term" value="P:iron-sulfur cluster assembly"/>
    <property type="evidence" value="ECO:0000315"/>
    <property type="project" value="GO_Central"/>
</dbReference>
<dbReference type="GO" id="GO:1904439">
    <property type="term" value="P:negative regulation of iron ion import across plasma membrane"/>
    <property type="evidence" value="ECO:0000315"/>
    <property type="project" value="ARUK-UCL"/>
</dbReference>
<dbReference type="GO" id="GO:1902958">
    <property type="term" value="P:positive regulation of mitochondrial electron transport, NADH to ubiquinone"/>
    <property type="evidence" value="ECO:0000315"/>
    <property type="project" value="ARUK-UCL"/>
</dbReference>
<dbReference type="CDD" id="cd06664">
    <property type="entry name" value="IscU_like"/>
    <property type="match status" value="1"/>
</dbReference>
<dbReference type="FunFam" id="3.90.1010.10:FF:000008">
    <property type="entry name" value="Iron-sulfur cluster assembly enzyme"/>
    <property type="match status" value="1"/>
</dbReference>
<dbReference type="Gene3D" id="3.90.1010.10">
    <property type="match status" value="1"/>
</dbReference>
<dbReference type="InterPro" id="IPR011339">
    <property type="entry name" value="ISCU"/>
</dbReference>
<dbReference type="InterPro" id="IPR002871">
    <property type="entry name" value="NIF_FeS_clus_asmbl_NifU_N"/>
</dbReference>
<dbReference type="NCBIfam" id="TIGR01999">
    <property type="entry name" value="iscU"/>
    <property type="match status" value="1"/>
</dbReference>
<dbReference type="PANTHER" id="PTHR10093">
    <property type="entry name" value="IRON-SULFUR CLUSTER ASSEMBLY ENZYME NIFU HOMOLOG"/>
    <property type="match status" value="1"/>
</dbReference>
<dbReference type="Pfam" id="PF01592">
    <property type="entry name" value="NifU_N"/>
    <property type="match status" value="1"/>
</dbReference>
<dbReference type="SUPFAM" id="SSF82649">
    <property type="entry name" value="SufE/NifU"/>
    <property type="match status" value="1"/>
</dbReference>
<name>ISCU_HUMAN</name>